<comment type="function">
    <text evidence="5 7 8 9 11 12 13 14 15 16 17 18 20 21">Catalytic component of the RAG complex, a multiprotein complex that mediates the DNA cleavage phase during V(D)J recombination. V(D)J recombination assembles a diverse repertoire of immunoglobulin and T-cell receptor genes in developing B and T-lymphocytes through rearrangement of different V (variable), in some cases D (diversity), and J (joining) gene segments. In the RAG complex, RAG1 mediates the DNA-binding to the conserved recombination signal sequences (RSS) and catalyzes the DNA cleavage activities by introducing a double-strand break between the RSS and the adjacent coding segment. RAG2 is not a catalytic component but is required for all known catalytic activities. DNA cleavage occurs in 2 steps: a first nick is introduced in the top strand immediately upstream of the heptamer, generating a 3'-hydroxyl group that can attack the phosphodiester bond on the opposite strand in a direct transesterification reaction, thereby creating 4 DNA ends: 2 hairpin coding ends and 2 blunt, 5'-phosphorylated ends. The chromatin structure plays an essential role in the V(D)J recombination reactions and the presence of histone H3 trimethylated at 'Lys-4' (H3K4me3) stimulates both the nicking and haipinning steps. The RAG complex also plays a role in pre-B cell allelic exclusion, a process leading to expression of a single immunoglobulin heavy chain allele to enforce clonality and monospecific recognition by the B-cell antigen receptor (BCR) expressed on individual B-lymphocytes. The introduction of DNA breaks by the RAG complex on one immunoglobulin allele induces ATM-dependent repositioning of the other allele to pericentromeric heterochromatin, preventing accessibility to the RAG complex and recombination of the second allele. In addition to its endonuclease activity, RAG1 also acts as an E3 ubiquitin-protein ligase that mediates monoubiquitination of histone H3. Histone H3 monoubiquitination is required for the joining step of V(D)J recombination. Mediates polyubiquitination of KPNA1.</text>
</comment>
<comment type="catalytic activity">
    <reaction>
        <text>S-ubiquitinyl-[E2 ubiquitin-conjugating enzyme]-L-cysteine + [acceptor protein]-L-lysine = [E2 ubiquitin-conjugating enzyme]-L-cysteine + N(6)-ubiquitinyl-[acceptor protein]-L-lysine.</text>
        <dbReference type="EC" id="2.3.2.27"/>
    </reaction>
</comment>
<comment type="cofactor">
    <cofactor evidence="5">
        <name>Mg(2+)</name>
        <dbReference type="ChEBI" id="CHEBI:18420"/>
    </cofactor>
    <cofactor evidence="5">
        <name>Mn(2+)</name>
        <dbReference type="ChEBI" id="CHEBI:29035"/>
    </cofactor>
    <text evidence="5">Binds 1 divalent metal cation per subunit. Mg(2+) or Mn(2+).</text>
</comment>
<comment type="subunit">
    <text evidence="13 17 20 21 22 23">Homodimer. Component of the RAG complex composed of core components RAG1 and RAG2, and associated component HMGB1 or HMGB2. Interacts with DCAF1, leading to recruitment of the CUL4A-RBX1-DDB1-DCAF1/VPRBP complex to ubiquitinate proteins and limit error-prone repair during V(D)J recombination.</text>
</comment>
<comment type="interaction">
    <interactant intactId="EBI-7602168">
        <id>P15919</id>
    </interactant>
    <interactant intactId="EBI-7602168">
        <id>P15919</id>
        <label>Rag1</label>
    </interactant>
    <organismsDiffer>false</organismsDiffer>
    <experiments>4</experiments>
</comment>
<comment type="interaction">
    <interactant intactId="EBI-7602168">
        <id>P15919</id>
    </interactant>
    <interactant intactId="EBI-7602123">
        <id>P21784</id>
        <label>Rag2</label>
    </interactant>
    <organismsDiffer>false</organismsDiffer>
    <experiments>4</experiments>
</comment>
<comment type="subcellular location">
    <subcellularLocation>
        <location evidence="2 19">Nucleus</location>
    </subcellularLocation>
</comment>
<comment type="tissue specificity">
    <text>Maturing lymphoid cells and central nervous system.</text>
</comment>
<comment type="domain">
    <text evidence="13">The RING-type zinc finger mediates the E3 ubiquitin-protein ligase activity.</text>
</comment>
<comment type="domain">
    <text evidence="2 13">The NBD (nonamer binding) DNA-binding domain mediates the specific binding to the nonamer RSS motif by forming a tightly interwoven homodimer that binds and synapses 2 nonamer elements, with each NBD making contact with both DNA molecules. Each RSS is composed of well-conserved heptamer (consensus 5'-CACAGTG-3') and nonamer (consensus 5'-ACAAAAACC-3') sequences separated by a spacer of either 12 bp or 23 bp.</text>
</comment>
<comment type="PTM">
    <text evidence="9 12">Autoubiquitinated in the presence of CDC34/UBCH3.</text>
</comment>
<comment type="disruption phenotype">
    <text evidence="10">Mice display a severe combined immunodeficiency phenotype. The have a small lymphoid organs that do not contain mature B and T-lymphocytes. The arrest of B- and T-cell differentiation occurs at an early stage and correlates with the inability to perform V(D)J recombination. The frequency of homologous immunoglobulin pairing is much lower. No obvious neuroanatomical or behavioral abnormalities have been observed.</text>
</comment>
<comment type="similarity">
    <text evidence="2">Belongs to the RAG1 family.</text>
</comment>
<organism>
    <name type="scientific">Mus musculus</name>
    <name type="common">Mouse</name>
    <dbReference type="NCBI Taxonomy" id="10090"/>
    <lineage>
        <taxon>Eukaryota</taxon>
        <taxon>Metazoa</taxon>
        <taxon>Chordata</taxon>
        <taxon>Craniata</taxon>
        <taxon>Vertebrata</taxon>
        <taxon>Euteleostomi</taxon>
        <taxon>Mammalia</taxon>
        <taxon>Eutheria</taxon>
        <taxon>Euarchontoglires</taxon>
        <taxon>Glires</taxon>
        <taxon>Rodentia</taxon>
        <taxon>Myomorpha</taxon>
        <taxon>Muroidea</taxon>
        <taxon>Muridae</taxon>
        <taxon>Murinae</taxon>
        <taxon>Mus</taxon>
        <taxon>Mus</taxon>
    </lineage>
</organism>
<gene>
    <name type="primary">Rag1</name>
</gene>
<keyword id="KW-0002">3D-structure</keyword>
<keyword id="KW-0156">Chromatin regulator</keyword>
<keyword id="KW-0233">DNA recombination</keyword>
<keyword id="KW-0238">DNA-binding</keyword>
<keyword id="KW-0255">Endonuclease</keyword>
<keyword id="KW-0378">Hydrolase</keyword>
<keyword id="KW-1017">Isopeptide bond</keyword>
<keyword id="KW-0479">Metal-binding</keyword>
<keyword id="KW-0511">Multifunctional enzyme</keyword>
<keyword id="KW-0540">Nuclease</keyword>
<keyword id="KW-0539">Nucleus</keyword>
<keyword id="KW-1185">Reference proteome</keyword>
<keyword id="KW-0808">Transferase</keyword>
<keyword id="KW-0832">Ubl conjugation</keyword>
<keyword id="KW-0833">Ubl conjugation pathway</keyword>
<keyword id="KW-0862">Zinc</keyword>
<keyword id="KW-0863">Zinc-finger</keyword>
<proteinExistence type="evidence at protein level"/>
<sequence length="1040" mass="119185">MAASLPSTLSFSSAPDEIQHPQIKFSEWKFKLFRVRSFEKAPEEAQKEKDSSEGKPYLEQSPVVPEKPGGQNSILTQRALKLHPKFSKKFHADGKSSDKAVHQARLRHFCRICGNRFKSDGHSRRYPVHGPVDAKTQSLFRKKEKRVTSWPDLIARIFRIDVKADVDSIHPTEFCHDCWSIMHRKFSSSHSQVYFPRKVTVEWHPHTPSCDICFTAHRGLKRKRHQPNVQLSKKLKTVLNHARRDRRKRTQARVSSKEVLKKISNCSKIHLSTKLLAVDFPAHFVKSISCQICEHILADPVETSCKHLFCRICILRCLKVMGSYCPSCRYPCFPTDLESPVKSFLNILNSLMVKCPAQDCNEEVSLEKYNHHVSSHKESKETLVHINKGGRPRQHLLSLTRRAQKHRLRELKIQVKEFADKEEGGDVKAVCLTLFLLALRARNEHRQADELEAIMQGRGSGLQPAVCLAIRVNTFLSCSQYHKMYRTVKAITGRQIFQPLHALRNAEKVLLPGYHPFEWQPPLKNVSSRTDVGIIDGLSGLASSVDEYPVDTIAKRFRYDSALVSALMDMEEDILEGMRSQDLDDYLNGPFTVVVKESCDGMGDVSEKHGSGPAVPEKAVRFSFTVMRITIEHGSQNVKVFEEPKPNSELCCKPLCLMLADESDHETLTAILSPLIAEREAMKSSELTLEMGGIPRTFKFIFRGTGYDEKLVREVEGLEASGSVYICTLCDTTRLEASQNLVFHSITRSHAENLQRYEVWRSNPYHESVEELRDRVKGVSAKPFIETVPSIDALHCDIGNAAEFYKIFQLEIGEVYKHPNASKEERKRWQATLDKHLRKRMNLKPIMRMNGNFARKLMTQETVDAVCELIPSEERHEALRELMDLYLKMKPVWRSSCPAKECPESLCQYSFNSQRFAELLSTKFKYRYEGKITNYFHKTLAHVPEIIERDGSIGAWASEGNESGNKLFRRFRKMNARQSKCYEMEDVLKHHWLYTSKYLQKFMNAHNALKSSGFTMNSKETLGDPLGIEDSLESQDSMEF</sequence>
<dbReference type="EC" id="3.1.-.-"/>
<dbReference type="EC" id="2.3.2.27"/>
<dbReference type="EMBL" id="M29475">
    <property type="protein sequence ID" value="AAA40028.1"/>
    <property type="molecule type" value="mRNA"/>
</dbReference>
<dbReference type="EMBL" id="AL929569">
    <property type="status" value="NOT_ANNOTATED_CDS"/>
    <property type="molecule type" value="Genomic_DNA"/>
</dbReference>
<dbReference type="EMBL" id="CH466519">
    <property type="protein sequence ID" value="EDL27655.1"/>
    <property type="molecule type" value="Genomic_DNA"/>
</dbReference>
<dbReference type="EMBL" id="BC138342">
    <property type="protein sequence ID" value="AAI38343.1"/>
    <property type="molecule type" value="mRNA"/>
</dbReference>
<dbReference type="CCDS" id="CCDS16463.1"/>
<dbReference type="PIR" id="B33754">
    <property type="entry name" value="B33754"/>
</dbReference>
<dbReference type="RefSeq" id="NP_033045.2">
    <property type="nucleotide sequence ID" value="NM_009019.2"/>
</dbReference>
<dbReference type="RefSeq" id="XP_006499075.1">
    <property type="nucleotide sequence ID" value="XM_006499012.1"/>
</dbReference>
<dbReference type="PDB" id="1RMD">
    <property type="method" value="X-ray"/>
    <property type="resolution" value="2.10 A"/>
    <property type="chains" value="A=265-380"/>
</dbReference>
<dbReference type="PDB" id="3GNA">
    <property type="method" value="X-ray"/>
    <property type="resolution" value="2.40 A"/>
    <property type="chains" value="A=389-464"/>
</dbReference>
<dbReference type="PDB" id="3GNB">
    <property type="method" value="X-ray"/>
    <property type="resolution" value="3.00 A"/>
    <property type="chains" value="A=389-464"/>
</dbReference>
<dbReference type="PDB" id="4WWX">
    <property type="method" value="X-ray"/>
    <property type="resolution" value="3.20 A"/>
    <property type="chains" value="B/E=392-1008"/>
</dbReference>
<dbReference type="PDB" id="5ZDZ">
    <property type="method" value="X-ray"/>
    <property type="resolution" value="2.80 A"/>
    <property type="chains" value="A/C=384-1008"/>
</dbReference>
<dbReference type="PDB" id="5ZE0">
    <property type="method" value="X-ray"/>
    <property type="resolution" value="2.75 A"/>
    <property type="chains" value="A/C=384-1008"/>
</dbReference>
<dbReference type="PDB" id="5ZE1">
    <property type="method" value="X-ray"/>
    <property type="resolution" value="3.00 A"/>
    <property type="chains" value="A/C=384-1008"/>
</dbReference>
<dbReference type="PDB" id="5ZE2">
    <property type="method" value="X-ray"/>
    <property type="resolution" value="3.30 A"/>
    <property type="chains" value="A/C=384-1008"/>
</dbReference>
<dbReference type="PDB" id="6CG0">
    <property type="method" value="EM"/>
    <property type="resolution" value="3.17 A"/>
    <property type="chains" value="A/C=265-1039"/>
</dbReference>
<dbReference type="PDB" id="6CIJ">
    <property type="method" value="EM"/>
    <property type="resolution" value="3.90 A"/>
    <property type="chains" value="A/C=265-1040"/>
</dbReference>
<dbReference type="PDB" id="6CIK">
    <property type="method" value="X-ray"/>
    <property type="resolution" value="3.15 A"/>
    <property type="chains" value="A/C=384-1008"/>
</dbReference>
<dbReference type="PDB" id="6CIL">
    <property type="method" value="X-ray"/>
    <property type="resolution" value="4.15 A"/>
    <property type="chains" value="A/C=384-1008"/>
</dbReference>
<dbReference type="PDB" id="6CIM">
    <property type="method" value="X-ray"/>
    <property type="resolution" value="3.60 A"/>
    <property type="chains" value="A/C=384-1008"/>
</dbReference>
<dbReference type="PDB" id="6OEM">
    <property type="method" value="EM"/>
    <property type="resolution" value="3.60 A"/>
    <property type="chains" value="A/C=1-1040"/>
</dbReference>
<dbReference type="PDB" id="6OEN">
    <property type="method" value="EM"/>
    <property type="resolution" value="4.30 A"/>
    <property type="chains" value="A/C=1-1040"/>
</dbReference>
<dbReference type="PDB" id="6OEO">
    <property type="method" value="EM"/>
    <property type="resolution" value="3.69 A"/>
    <property type="chains" value="A/C=1-1040"/>
</dbReference>
<dbReference type="PDB" id="6OEP">
    <property type="method" value="EM"/>
    <property type="resolution" value="3.70 A"/>
    <property type="chains" value="A/C=1-1040"/>
</dbReference>
<dbReference type="PDB" id="6OEQ">
    <property type="method" value="EM"/>
    <property type="resolution" value="4.30 A"/>
    <property type="chains" value="A/C=1-1040"/>
</dbReference>
<dbReference type="PDB" id="6OER">
    <property type="method" value="EM"/>
    <property type="resolution" value="3.29 A"/>
    <property type="chains" value="A/C=1-1040"/>
</dbReference>
<dbReference type="PDB" id="6OES">
    <property type="method" value="EM"/>
    <property type="resolution" value="3.06 A"/>
    <property type="chains" value="A/C=1-1040"/>
</dbReference>
<dbReference type="PDB" id="6OET">
    <property type="method" value="EM"/>
    <property type="resolution" value="3.40 A"/>
    <property type="chains" value="A/C=1-1040"/>
</dbReference>
<dbReference type="PDB" id="6V0V">
    <property type="method" value="EM"/>
    <property type="resolution" value="3.61 A"/>
    <property type="chains" value="A=265-1039"/>
</dbReference>
<dbReference type="PDB" id="6XNX">
    <property type="method" value="EM"/>
    <property type="resolution" value="2.70 A"/>
    <property type="chains" value="A/C=261-1008"/>
</dbReference>
<dbReference type="PDB" id="6XNY">
    <property type="method" value="EM"/>
    <property type="resolution" value="2.90 A"/>
    <property type="chains" value="A/C=261-1008"/>
</dbReference>
<dbReference type="PDB" id="6XNZ">
    <property type="method" value="EM"/>
    <property type="resolution" value="3.80 A"/>
    <property type="chains" value="A/C=261-1008"/>
</dbReference>
<dbReference type="PDBsum" id="1RMD"/>
<dbReference type="PDBsum" id="3GNA"/>
<dbReference type="PDBsum" id="3GNB"/>
<dbReference type="PDBsum" id="4WWX"/>
<dbReference type="PDBsum" id="5ZDZ"/>
<dbReference type="PDBsum" id="5ZE0"/>
<dbReference type="PDBsum" id="5ZE1"/>
<dbReference type="PDBsum" id="5ZE2"/>
<dbReference type="PDBsum" id="6CG0"/>
<dbReference type="PDBsum" id="6CIJ"/>
<dbReference type="PDBsum" id="6CIK"/>
<dbReference type="PDBsum" id="6CIL"/>
<dbReference type="PDBsum" id="6CIM"/>
<dbReference type="PDBsum" id="6OEM"/>
<dbReference type="PDBsum" id="6OEN"/>
<dbReference type="PDBsum" id="6OEO"/>
<dbReference type="PDBsum" id="6OEP"/>
<dbReference type="PDBsum" id="6OEQ"/>
<dbReference type="PDBsum" id="6OER"/>
<dbReference type="PDBsum" id="6OES"/>
<dbReference type="PDBsum" id="6OET"/>
<dbReference type="PDBsum" id="6V0V"/>
<dbReference type="PDBsum" id="6XNX"/>
<dbReference type="PDBsum" id="6XNY"/>
<dbReference type="PDBsum" id="6XNZ"/>
<dbReference type="EMDB" id="EMD-20030"/>
<dbReference type="EMDB" id="EMD-20031"/>
<dbReference type="EMDB" id="EMD-20032"/>
<dbReference type="EMDB" id="EMD-20033"/>
<dbReference type="EMDB" id="EMD-20034"/>
<dbReference type="EMDB" id="EMD-20035"/>
<dbReference type="EMDB" id="EMD-20036"/>
<dbReference type="EMDB" id="EMD-20037"/>
<dbReference type="EMDB" id="EMD-21003"/>
<dbReference type="EMDB" id="EMD-22272"/>
<dbReference type="EMDB" id="EMD-22273"/>
<dbReference type="EMDB" id="EMD-22274"/>
<dbReference type="EMDB" id="EMD-7470"/>
<dbReference type="EMDB" id="EMD-7480"/>
<dbReference type="SMR" id="P15919"/>
<dbReference type="BioGRID" id="202574">
    <property type="interactions" value="13"/>
</dbReference>
<dbReference type="CORUM" id="P15919"/>
<dbReference type="DIP" id="DIP-48518N"/>
<dbReference type="FunCoup" id="P15919">
    <property type="interactions" value="468"/>
</dbReference>
<dbReference type="IntAct" id="P15919">
    <property type="interactions" value="4"/>
</dbReference>
<dbReference type="MINT" id="P15919"/>
<dbReference type="STRING" id="10090.ENSMUSP00000077584"/>
<dbReference type="iPTMnet" id="P15919"/>
<dbReference type="PhosphoSitePlus" id="P15919"/>
<dbReference type="PaxDb" id="10090-ENSMUSP00000077584"/>
<dbReference type="ProteomicsDB" id="254894"/>
<dbReference type="Antibodypedia" id="42779">
    <property type="antibodies" value="121 antibodies from 26 providers"/>
</dbReference>
<dbReference type="DNASU" id="19373"/>
<dbReference type="Ensembl" id="ENSMUST00000078494.6">
    <property type="protein sequence ID" value="ENSMUSP00000077584.6"/>
    <property type="gene ID" value="ENSMUSG00000061311.7"/>
</dbReference>
<dbReference type="GeneID" id="19373"/>
<dbReference type="KEGG" id="mmu:19373"/>
<dbReference type="UCSC" id="uc008lhk.2">
    <property type="organism name" value="mouse"/>
</dbReference>
<dbReference type="AGR" id="MGI:97848"/>
<dbReference type="CTD" id="5896"/>
<dbReference type="MGI" id="MGI:97848">
    <property type="gene designation" value="Rag1"/>
</dbReference>
<dbReference type="VEuPathDB" id="HostDB:ENSMUSG00000061311"/>
<dbReference type="eggNOG" id="ENOG502QSFV">
    <property type="taxonomic scope" value="Eukaryota"/>
</dbReference>
<dbReference type="GeneTree" id="ENSGT00390000008679"/>
<dbReference type="HOGENOM" id="CLU_010909_0_0_1"/>
<dbReference type="InParanoid" id="P15919"/>
<dbReference type="OMA" id="WKFKLFK"/>
<dbReference type="OrthoDB" id="6270329at2759"/>
<dbReference type="PhylomeDB" id="P15919"/>
<dbReference type="TreeFam" id="TF331926"/>
<dbReference type="BioGRID-ORCS" id="19373">
    <property type="hits" value="0 hits in 80 CRISPR screens"/>
</dbReference>
<dbReference type="EvolutionaryTrace" id="P15919"/>
<dbReference type="PRO" id="PR:P15919"/>
<dbReference type="Proteomes" id="UP000000589">
    <property type="component" value="Chromosome 2"/>
</dbReference>
<dbReference type="RNAct" id="P15919">
    <property type="molecule type" value="protein"/>
</dbReference>
<dbReference type="Bgee" id="ENSMUSG00000061311">
    <property type="expression patterns" value="Expressed in thymus and 46 other cell types or tissues"/>
</dbReference>
<dbReference type="GO" id="GO:0005654">
    <property type="term" value="C:nucleoplasm"/>
    <property type="evidence" value="ECO:0000304"/>
    <property type="project" value="Reactome"/>
</dbReference>
<dbReference type="GO" id="GO:0005634">
    <property type="term" value="C:nucleus"/>
    <property type="evidence" value="ECO:0000314"/>
    <property type="project" value="UniProtKB"/>
</dbReference>
<dbReference type="GO" id="GO:0004519">
    <property type="term" value="F:endonuclease activity"/>
    <property type="evidence" value="ECO:0000315"/>
    <property type="project" value="UniProtKB"/>
</dbReference>
<dbReference type="GO" id="GO:0042393">
    <property type="term" value="F:histone binding"/>
    <property type="evidence" value="ECO:0000314"/>
    <property type="project" value="UniProtKB"/>
</dbReference>
<dbReference type="GO" id="GO:0042802">
    <property type="term" value="F:identical protein binding"/>
    <property type="evidence" value="ECO:0000353"/>
    <property type="project" value="IntAct"/>
</dbReference>
<dbReference type="GO" id="GO:0046872">
    <property type="term" value="F:metal ion binding"/>
    <property type="evidence" value="ECO:0000315"/>
    <property type="project" value="UniProtKB"/>
</dbReference>
<dbReference type="GO" id="GO:0042803">
    <property type="term" value="F:protein homodimerization activity"/>
    <property type="evidence" value="ECO:0000314"/>
    <property type="project" value="UniProtKB"/>
</dbReference>
<dbReference type="GO" id="GO:0043565">
    <property type="term" value="F:sequence-specific DNA binding"/>
    <property type="evidence" value="ECO:0000314"/>
    <property type="project" value="UniProtKB"/>
</dbReference>
<dbReference type="GO" id="GO:0061630">
    <property type="term" value="F:ubiquitin protein ligase activity"/>
    <property type="evidence" value="ECO:0000314"/>
    <property type="project" value="MGI"/>
</dbReference>
<dbReference type="GO" id="GO:0004842">
    <property type="term" value="F:ubiquitin-protein transferase activity"/>
    <property type="evidence" value="ECO:0000314"/>
    <property type="project" value="UniProtKB"/>
</dbReference>
<dbReference type="GO" id="GO:0008270">
    <property type="term" value="F:zinc ion binding"/>
    <property type="evidence" value="ECO:0000314"/>
    <property type="project" value="UniProtKB"/>
</dbReference>
<dbReference type="GO" id="GO:0002250">
    <property type="term" value="P:adaptive immune response"/>
    <property type="evidence" value="ECO:0000315"/>
    <property type="project" value="MGI"/>
</dbReference>
<dbReference type="GO" id="GO:0030183">
    <property type="term" value="P:B cell differentiation"/>
    <property type="evidence" value="ECO:0000314"/>
    <property type="project" value="MGI"/>
</dbReference>
<dbReference type="GO" id="GO:0006325">
    <property type="term" value="P:chromatin organization"/>
    <property type="evidence" value="ECO:0007669"/>
    <property type="project" value="UniProtKB-KW"/>
</dbReference>
<dbReference type="GO" id="GO:0006310">
    <property type="term" value="P:DNA recombination"/>
    <property type="evidence" value="ECO:0000304"/>
    <property type="project" value="MGI"/>
</dbReference>
<dbReference type="GO" id="GO:0070233">
    <property type="term" value="P:negative regulation of T cell apoptotic process"/>
    <property type="evidence" value="ECO:0000316"/>
    <property type="project" value="MGI"/>
</dbReference>
<dbReference type="GO" id="GO:0070244">
    <property type="term" value="P:negative regulation of thymocyte apoptotic process"/>
    <property type="evidence" value="ECO:0000315"/>
    <property type="project" value="MGI"/>
</dbReference>
<dbReference type="GO" id="GO:0045582">
    <property type="term" value="P:positive regulation of T cell differentiation"/>
    <property type="evidence" value="ECO:0000315"/>
    <property type="project" value="CACAO"/>
</dbReference>
<dbReference type="GO" id="GO:0002331">
    <property type="term" value="P:pre-B cell allelic exclusion"/>
    <property type="evidence" value="ECO:0000315"/>
    <property type="project" value="UniProtKB"/>
</dbReference>
<dbReference type="GO" id="GO:0051865">
    <property type="term" value="P:protein autoubiquitination"/>
    <property type="evidence" value="ECO:0000314"/>
    <property type="project" value="UniProtKB"/>
</dbReference>
<dbReference type="GO" id="GO:2000822">
    <property type="term" value="P:regulation of behavioral fear response"/>
    <property type="evidence" value="ECO:0007669"/>
    <property type="project" value="Ensembl"/>
</dbReference>
<dbReference type="GO" id="GO:0045580">
    <property type="term" value="P:regulation of T cell differentiation"/>
    <property type="evidence" value="ECO:0000316"/>
    <property type="project" value="MGI"/>
</dbReference>
<dbReference type="GO" id="GO:0033077">
    <property type="term" value="P:T cell differentiation in thymus"/>
    <property type="evidence" value="ECO:0000315"/>
    <property type="project" value="UniProtKB"/>
</dbReference>
<dbReference type="GO" id="GO:0043029">
    <property type="term" value="P:T cell homeostasis"/>
    <property type="evidence" value="ECO:0000316"/>
    <property type="project" value="MGI"/>
</dbReference>
<dbReference type="GO" id="GO:0048538">
    <property type="term" value="P:thymus development"/>
    <property type="evidence" value="ECO:0000316"/>
    <property type="project" value="MGI"/>
</dbReference>
<dbReference type="GO" id="GO:0033151">
    <property type="term" value="P:V(D)J recombination"/>
    <property type="evidence" value="ECO:0000315"/>
    <property type="project" value="UniProtKB"/>
</dbReference>
<dbReference type="GO" id="GO:0008542">
    <property type="term" value="P:visual learning"/>
    <property type="evidence" value="ECO:0007669"/>
    <property type="project" value="Ensembl"/>
</dbReference>
<dbReference type="CDD" id="cd16530">
    <property type="entry name" value="RING-HC_RAG1"/>
    <property type="match status" value="1"/>
</dbReference>
<dbReference type="FunFam" id="3.30.160.60:FF:000697">
    <property type="entry name" value="Recombination activating gene 1"/>
    <property type="match status" value="1"/>
</dbReference>
<dbReference type="FunFam" id="3.30.40.10:FF:000142">
    <property type="entry name" value="Recombination activating gene 1"/>
    <property type="match status" value="1"/>
</dbReference>
<dbReference type="Gene3D" id="6.10.140.510">
    <property type="match status" value="1"/>
</dbReference>
<dbReference type="Gene3D" id="3.30.160.60">
    <property type="entry name" value="Classic Zinc Finger"/>
    <property type="match status" value="1"/>
</dbReference>
<dbReference type="Gene3D" id="3.30.40.10">
    <property type="entry name" value="Zinc/RING finger domain, C3HC4 (zinc finger)"/>
    <property type="match status" value="1"/>
</dbReference>
<dbReference type="InterPro" id="IPR024627">
    <property type="entry name" value="RAG1"/>
</dbReference>
<dbReference type="InterPro" id="IPR035714">
    <property type="entry name" value="RAG1_imp-bd"/>
</dbReference>
<dbReference type="InterPro" id="IPR019485">
    <property type="entry name" value="RAG1_Znf"/>
</dbReference>
<dbReference type="InterPro" id="IPR023336">
    <property type="entry name" value="RAG_nonamer-bd_dom"/>
</dbReference>
<dbReference type="InterPro" id="IPR036236">
    <property type="entry name" value="Znf_C2H2_sf"/>
</dbReference>
<dbReference type="InterPro" id="IPR018957">
    <property type="entry name" value="Znf_C3HC4_RING-type"/>
</dbReference>
<dbReference type="InterPro" id="IPR001841">
    <property type="entry name" value="Znf_RING"/>
</dbReference>
<dbReference type="InterPro" id="IPR013083">
    <property type="entry name" value="Znf_RING/FYVE/PHD"/>
</dbReference>
<dbReference type="InterPro" id="IPR017907">
    <property type="entry name" value="Znf_RING_CS"/>
</dbReference>
<dbReference type="PANTHER" id="PTHR11539:SF0">
    <property type="entry name" value="V(D)J RECOMBINATION-ACTIVATING PROTEIN 1"/>
    <property type="match status" value="1"/>
</dbReference>
<dbReference type="PANTHER" id="PTHR11539">
    <property type="entry name" value="VDJ RECOMBINATION ACTIVATING PROTEIN 1 RAG1"/>
    <property type="match status" value="1"/>
</dbReference>
<dbReference type="Pfam" id="PF12940">
    <property type="entry name" value="RAG1"/>
    <property type="match status" value="1"/>
</dbReference>
<dbReference type="Pfam" id="PF12560">
    <property type="entry name" value="RAG1_imp_bd"/>
    <property type="match status" value="1"/>
</dbReference>
<dbReference type="Pfam" id="PF00097">
    <property type="entry name" value="zf-C3HC4"/>
    <property type="match status" value="1"/>
</dbReference>
<dbReference type="Pfam" id="PF10426">
    <property type="entry name" value="zf-RAG1"/>
    <property type="match status" value="1"/>
</dbReference>
<dbReference type="SMART" id="SM00184">
    <property type="entry name" value="RING"/>
    <property type="match status" value="1"/>
</dbReference>
<dbReference type="SUPFAM" id="SSF57667">
    <property type="entry name" value="beta-beta-alpha zinc fingers"/>
    <property type="match status" value="1"/>
</dbReference>
<dbReference type="SUPFAM" id="SSF57850">
    <property type="entry name" value="RING/U-box"/>
    <property type="match status" value="1"/>
</dbReference>
<dbReference type="PROSITE" id="PS51487">
    <property type="entry name" value="NBD"/>
    <property type="match status" value="1"/>
</dbReference>
<dbReference type="PROSITE" id="PS51765">
    <property type="entry name" value="ZF_RAG1"/>
    <property type="match status" value="1"/>
</dbReference>
<dbReference type="PROSITE" id="PS00518">
    <property type="entry name" value="ZF_RING_1"/>
    <property type="match status" value="1"/>
</dbReference>
<dbReference type="PROSITE" id="PS50089">
    <property type="entry name" value="ZF_RING_2"/>
    <property type="match status" value="1"/>
</dbReference>
<evidence type="ECO:0000255" key="1">
    <source>
        <dbReference type="PROSITE-ProRule" id="PRU00175"/>
    </source>
</evidence>
<evidence type="ECO:0000255" key="2">
    <source>
        <dbReference type="PROSITE-ProRule" id="PRU00820"/>
    </source>
</evidence>
<evidence type="ECO:0000255" key="3">
    <source>
        <dbReference type="PROSITE-ProRule" id="PRU01101"/>
    </source>
</evidence>
<evidence type="ECO:0000256" key="4">
    <source>
        <dbReference type="SAM" id="MobiDB-lite"/>
    </source>
</evidence>
<evidence type="ECO:0000269" key="5">
    <source>
    </source>
</evidence>
<evidence type="ECO:0000269" key="6">
    <source>
    </source>
</evidence>
<evidence type="ECO:0000269" key="7">
    <source>
    </source>
</evidence>
<evidence type="ECO:0000269" key="8">
    <source>
    </source>
</evidence>
<evidence type="ECO:0000269" key="9">
    <source>
    </source>
</evidence>
<evidence type="ECO:0000269" key="10">
    <source>
    </source>
</evidence>
<evidence type="ECO:0000269" key="11">
    <source>
    </source>
</evidence>
<evidence type="ECO:0000269" key="12">
    <source>
    </source>
</evidence>
<evidence type="ECO:0000269" key="13">
    <source>
    </source>
</evidence>
<evidence type="ECO:0000269" key="14">
    <source>
    </source>
</evidence>
<evidence type="ECO:0000269" key="15">
    <source>
    </source>
</evidence>
<evidence type="ECO:0000269" key="16">
    <source>
    </source>
</evidence>
<evidence type="ECO:0000269" key="17">
    <source>
    </source>
</evidence>
<evidence type="ECO:0000269" key="18">
    <source>
    </source>
</evidence>
<evidence type="ECO:0000269" key="19">
    <source>
    </source>
</evidence>
<evidence type="ECO:0000269" key="20">
    <source>
    </source>
</evidence>
<evidence type="ECO:0000269" key="21">
    <source>
    </source>
</evidence>
<evidence type="ECO:0000269" key="22">
    <source>
    </source>
</evidence>
<evidence type="ECO:0000269" key="23">
    <source>
    </source>
</evidence>
<evidence type="ECO:0000305" key="24"/>
<evidence type="ECO:0007829" key="25">
    <source>
        <dbReference type="PDB" id="1RMD"/>
    </source>
</evidence>
<evidence type="ECO:0007829" key="26">
    <source>
        <dbReference type="PDB" id="3GNA"/>
    </source>
</evidence>
<evidence type="ECO:0007829" key="27">
    <source>
        <dbReference type="PDB" id="6XNX"/>
    </source>
</evidence>
<evidence type="ECO:0007829" key="28">
    <source>
        <dbReference type="PDB" id="6XNY"/>
    </source>
</evidence>
<protein>
    <recommendedName>
        <fullName>V(D)J recombination-activating protein 1</fullName>
        <shortName>RAG-1</shortName>
    </recommendedName>
    <domain>
        <recommendedName>
            <fullName>Endonuclease RAG1</fullName>
            <ecNumber>3.1.-.-</ecNumber>
        </recommendedName>
    </domain>
    <domain>
        <recommendedName>
            <fullName>E3 ubiquitin-protein ligase RAG1</fullName>
            <ecNumber>2.3.2.27</ecNumber>
        </recommendedName>
        <alternativeName>
            <fullName evidence="24">RING-type E3 ubiquitin transferase RAG1</fullName>
        </alternativeName>
    </domain>
</protein>
<feature type="chain" id="PRO_0000056005" description="V(D)J recombination-activating protein 1">
    <location>
        <begin position="1"/>
        <end position="1040"/>
    </location>
</feature>
<feature type="zinc finger region" description="RING-type" evidence="1">
    <location>
        <begin position="290"/>
        <end position="329"/>
    </location>
</feature>
<feature type="zinc finger region" description="RAG1-type" evidence="3">
    <location>
        <begin position="351"/>
        <end position="380"/>
    </location>
</feature>
<feature type="DNA-binding region" description="NBD" evidence="2">
    <location>
        <begin position="389"/>
        <end position="456"/>
    </location>
</feature>
<feature type="region of interest" description="Disordered" evidence="4">
    <location>
        <begin position="39"/>
        <end position="71"/>
    </location>
</feature>
<feature type="compositionally biased region" description="Basic and acidic residues" evidence="4">
    <location>
        <begin position="39"/>
        <end position="53"/>
    </location>
</feature>
<feature type="binding site" evidence="23">
    <location>
        <position position="266"/>
    </location>
    <ligand>
        <name>Zn(2+)</name>
        <dbReference type="ChEBI" id="CHEBI:29105"/>
        <label>1</label>
    </ligand>
</feature>
<feature type="binding site" evidence="23">
    <location>
        <position position="270"/>
    </location>
    <ligand>
        <name>Zn(2+)</name>
        <dbReference type="ChEBI" id="CHEBI:29105"/>
        <label>1</label>
    </ligand>
</feature>
<feature type="binding site" evidence="23">
    <location>
        <position position="290"/>
    </location>
    <ligand>
        <name>Zn(2+)</name>
        <dbReference type="ChEBI" id="CHEBI:29105"/>
        <label>2</label>
    </ligand>
</feature>
<feature type="binding site" evidence="23">
    <location>
        <position position="293"/>
    </location>
    <ligand>
        <name>Zn(2+)</name>
        <dbReference type="ChEBI" id="CHEBI:29105"/>
        <label>1</label>
    </ligand>
</feature>
<feature type="binding site" evidence="23">
    <location>
        <position position="293"/>
    </location>
    <ligand>
        <name>Zn(2+)</name>
        <dbReference type="ChEBI" id="CHEBI:29105"/>
        <label>2</label>
    </ligand>
</feature>
<feature type="binding site" evidence="23">
    <location>
        <position position="295"/>
    </location>
    <ligand>
        <name>Zn(2+)</name>
        <dbReference type="ChEBI" id="CHEBI:29105"/>
        <label>1</label>
    </ligand>
</feature>
<feature type="binding site" evidence="23">
    <location>
        <position position="305"/>
    </location>
    <ligand>
        <name>Zn(2+)</name>
        <dbReference type="ChEBI" id="CHEBI:29105"/>
        <label>3</label>
    </ligand>
</feature>
<feature type="binding site" evidence="23">
    <location>
        <position position="307"/>
    </location>
    <ligand>
        <name>Zn(2+)</name>
        <dbReference type="ChEBI" id="CHEBI:29105"/>
        <label>3</label>
    </ligand>
</feature>
<feature type="binding site" evidence="23">
    <location>
        <position position="310"/>
    </location>
    <ligand>
        <name>Zn(2+)</name>
        <dbReference type="ChEBI" id="CHEBI:29105"/>
        <label>2</label>
    </ligand>
</feature>
<feature type="binding site" evidence="23">
    <location>
        <position position="313"/>
    </location>
    <ligand>
        <name>Zn(2+)</name>
        <dbReference type="ChEBI" id="CHEBI:29105"/>
        <label>2</label>
    </ligand>
</feature>
<feature type="binding site" evidence="23">
    <location>
        <position position="325"/>
    </location>
    <ligand>
        <name>Zn(2+)</name>
        <dbReference type="ChEBI" id="CHEBI:29105"/>
        <label>3</label>
    </ligand>
</feature>
<feature type="binding site" evidence="23">
    <location>
        <position position="328"/>
    </location>
    <ligand>
        <name>Zn(2+)</name>
        <dbReference type="ChEBI" id="CHEBI:29105"/>
        <label>3</label>
    </ligand>
</feature>
<feature type="binding site" evidence="3 23">
    <location>
        <position position="355"/>
    </location>
    <ligand>
        <name>Zn(2+)</name>
        <dbReference type="ChEBI" id="CHEBI:29105"/>
        <label>4</label>
    </ligand>
</feature>
<feature type="binding site" evidence="3 23">
    <location>
        <position position="360"/>
    </location>
    <ligand>
        <name>Zn(2+)</name>
        <dbReference type="ChEBI" id="CHEBI:29105"/>
        <label>4</label>
    </ligand>
</feature>
<feature type="binding site" evidence="3 23">
    <location>
        <position position="372"/>
    </location>
    <ligand>
        <name>Zn(2+)</name>
        <dbReference type="ChEBI" id="CHEBI:29105"/>
        <label>4</label>
    </ligand>
</feature>
<feature type="binding site" evidence="3 23">
    <location>
        <position position="376"/>
    </location>
    <ligand>
        <name>Zn(2+)</name>
        <dbReference type="ChEBI" id="CHEBI:29105"/>
        <label>4</label>
    </ligand>
</feature>
<feature type="binding site" evidence="24">
    <location>
        <position position="600"/>
    </location>
    <ligand>
        <name>a divalent metal cation</name>
        <dbReference type="ChEBI" id="CHEBI:60240"/>
        <note>catalytic</note>
    </ligand>
</feature>
<feature type="binding site" evidence="24">
    <location>
        <position position="708"/>
    </location>
    <ligand>
        <name>a divalent metal cation</name>
        <dbReference type="ChEBI" id="CHEBI:60240"/>
        <note>catalytic</note>
    </ligand>
</feature>
<feature type="binding site" evidence="24">
    <location>
        <position position="962"/>
    </location>
    <ligand>
        <name>a divalent metal cation</name>
        <dbReference type="ChEBI" id="CHEBI:60240"/>
        <note>catalytic</note>
    </ligand>
</feature>
<feature type="site" description="Essential for DNA hairpin formation, participates in base-stacking interactions near the cleavage site">
    <location>
        <position position="893"/>
    </location>
</feature>
<feature type="cross-link" description="Glycyl lysine isopeptide (Lys-Gly) (interchain with G-Cter in ubiquitin)" evidence="9">
    <location>
        <position position="233"/>
    </location>
</feature>
<feature type="mutagenesis site" description="Abolishes autoubiquitination." evidence="9">
    <original>K</original>
    <variation>M</variation>
    <location>
        <position position="233"/>
    </location>
</feature>
<feature type="mutagenesis site" description="Displays lower E3 ligase activity and affects the joining step of V(D)J recombination." evidence="16">
    <original>H</original>
    <variation>A</variation>
    <location>
        <position position="307"/>
    </location>
</feature>
<feature type="mutagenesis site" description="Loss of E3 ligase activity and affects the joining step of V(D)J recombination." evidence="9 16">
    <original>C</original>
    <variation>G</variation>
    <location>
        <position position="325"/>
    </location>
</feature>
<feature type="mutagenesis site" description="Defects in converting nicked products to hairpins." evidence="13">
    <original>R</original>
    <variation>A</variation>
    <location>
        <position position="391"/>
    </location>
</feature>
<feature type="mutagenesis site" description="Impairs DNA-binding and hairpin formation while maintaining some nicking activity." evidence="13">
    <original>R</original>
    <variation>L</variation>
    <location>
        <position position="391"/>
    </location>
</feature>
<feature type="mutagenesis site" description="Impairs DNA-binding and hairpin formation while maintaining some nicking activity." evidence="13">
    <original>R</original>
    <variation>A</variation>
    <location>
        <position position="393"/>
    </location>
</feature>
<feature type="mutagenesis site" description="Allows robust hairpin activity." evidence="13">
    <original>R</original>
    <variation>A</variation>
    <location>
        <position position="401"/>
    </location>
</feature>
<feature type="mutagenesis site" description="Defects in converting nicked products to hairpins." evidence="13">
    <original>R</original>
    <variation>A</variation>
    <location>
        <position position="402"/>
    </location>
</feature>
<feature type="mutagenesis site" description="Reduced hairpin activity." evidence="13">
    <original>K</original>
    <variation>A</variation>
    <location>
        <position position="405"/>
    </location>
</feature>
<feature type="mutagenesis site" description="Allows robust hairpin activity." evidence="13">
    <original>H</original>
    <variation>A</variation>
    <location>
        <position position="406"/>
    </location>
</feature>
<feature type="mutagenesis site" description="Impairs DNA-binding and reduces hairpin formation without affecting nicking activity." evidence="13">
    <original>R</original>
    <variation>A</variation>
    <location>
        <position position="407"/>
    </location>
</feature>
<feature type="mutagenesis site" description="Impairs DNA-binding; when associated with A-445." evidence="13">
    <original>N</original>
    <variation>A</variation>
    <location>
        <position position="443"/>
    </location>
</feature>
<feature type="mutagenesis site" description="Impairs DNA-binding; when associated with A-443." evidence="13">
    <original>H</original>
    <variation>A</variation>
    <location>
        <position position="445"/>
    </location>
</feature>
<feature type="mutagenesis site" description="Loss of DNA-binding.">
    <original>D</original>
    <variation>A</variation>
    <location>
        <position position="546"/>
    </location>
</feature>
<feature type="mutagenesis site" description="Loss of DNA-binding.">
    <original>D</original>
    <variation>A</variation>
    <location>
        <position position="560"/>
    </location>
</feature>
<feature type="mutagenesis site" description="Impaired cleavage." evidence="5">
    <original>E</original>
    <variation>Q</variation>
    <location>
        <position position="597"/>
    </location>
</feature>
<feature type="mutagenesis site" description="Loss of cleavage and strand transfer activities." evidence="5 6 7">
    <original>D</original>
    <variation>A</variation>
    <location>
        <position position="600"/>
    </location>
</feature>
<feature type="mutagenesis site" description="Loss of cleavage (both nicking and hairpin formation)." evidence="5 6 7">
    <original>D</original>
    <variation>N</variation>
    <location>
        <position position="600"/>
    </location>
</feature>
<feature type="mutagenesis site" description="Deficient in both nicking and hairpin formation." evidence="11">
    <original>Y</original>
    <variation>A</variation>
    <location>
        <position position="707"/>
    </location>
</feature>
<feature type="mutagenesis site" description="Loss of cleavage and strand transfer activities without affecting allelic exclusion." evidence="5 6 7 14">
    <original>D</original>
    <variation>A</variation>
    <location>
        <position position="708"/>
    </location>
</feature>
<feature type="mutagenesis site" description="Loss of cleavage (both nicking and hairpin formation)." evidence="5 6 7 14">
    <original>D</original>
    <variation>N</variation>
    <location>
        <position position="708"/>
    </location>
</feature>
<feature type="mutagenesis site" description="Impaired cleavage (defective in hairpin formation)." evidence="5">
    <original>E</original>
    <variation>A</variation>
    <location>
        <position position="709"/>
    </location>
</feature>
<feature type="mutagenesis site" description="Impaired cleavage." evidence="5">
    <original>E</original>
    <variation>Q</variation>
    <location>
        <position position="709"/>
    </location>
</feature>
<feature type="mutagenesis site" description="Impaired cleavage (both nicking and hairpin formation).">
    <original>R</original>
    <variation>A</variation>
    <variation>C</variation>
    <location>
        <position position="713"/>
    </location>
</feature>
<feature type="mutagenesis site" description="Impaired cleavage." evidence="5">
    <original>E</original>
    <variation>Q</variation>
    <location>
        <position position="719"/>
    </location>
</feature>
<feature type="mutagenesis site" description="Deficient in both nicking and hairpin formation." evidence="11">
    <original>Y</original>
    <variation>A</variation>
    <location>
        <position position="725"/>
    </location>
</feature>
<feature type="mutagenesis site" description="Deficient in both nicking and hairpin formation." evidence="11">
    <original>W</original>
    <variation>A</variation>
    <location>
        <position position="760"/>
    </location>
</feature>
<feature type="mutagenesis site" description="Impaired cleavage." evidence="5">
    <original>D</original>
    <variation>N</variation>
    <location>
        <position position="792"/>
    </location>
</feature>
<feature type="mutagenesis site" description="Impaired cleavage." evidence="5">
    <original>E</original>
    <variation>A</variation>
    <location>
        <position position="811"/>
    </location>
</feature>
<feature type="mutagenesis site" description="Loss of DNA-binding." evidence="5">
    <original>E</original>
    <variation>Q</variation>
    <location>
        <position position="811"/>
    </location>
</feature>
<feature type="mutagenesis site" description="Capable of nicking but defective for hairpinning." evidence="11">
    <original>W</original>
    <variation>A</variation>
    <location>
        <position position="893"/>
    </location>
</feature>
<feature type="mutagenesis site" description="Capable of nicking and retains some hairpinning." evidence="11">
    <original>W</original>
    <variation>F</variation>
    <location>
        <position position="893"/>
    </location>
</feature>
<feature type="mutagenesis site" description="Capable of nicking but defective for hairpinning." evidence="11">
    <original>Y</original>
    <variation>A</variation>
    <variation>L</variation>
    <variation>F</variation>
    <location>
        <position position="935"/>
    </location>
</feature>
<feature type="mutagenesis site" description="Capable of both nicking and hairpinning." evidence="11">
    <original>Y</original>
    <variation>S</variation>
    <variation>T</variation>
    <location>
        <position position="935"/>
    </location>
</feature>
<feature type="mutagenesis site" description="Capable of nicking but defective for hairpinning.">
    <original>K</original>
    <variation>A</variation>
    <location>
        <position position="938"/>
    </location>
</feature>
<feature type="mutagenesis site" description="Deficient in both nicking and hairpin formation." evidence="11">
    <original>W</original>
    <variation>A</variation>
    <location>
        <position position="956"/>
    </location>
</feature>
<feature type="mutagenesis site" description="Impaired cleavage." evidence="5">
    <original>E</original>
    <variation>Q</variation>
    <location>
        <position position="959"/>
    </location>
</feature>
<feature type="mutagenesis site" description="Loss of cleavage (both nicking and hairpin formation)." evidence="5 6 11">
    <original>E</original>
    <variation>A</variation>
    <variation>Q</variation>
    <location>
        <position position="962"/>
    </location>
</feature>
<feature type="mutagenesis site" description="Capable of nicking but defective for hairpinning." evidence="11">
    <original>F</original>
    <variation>A</variation>
    <variation>W</variation>
    <location>
        <position position="971"/>
    </location>
</feature>
<feature type="mutagenesis site" description="Capable of nicking but defective for hairpinning." evidence="11">
    <original>R</original>
    <variation>A</variation>
    <location>
        <position position="972"/>
    </location>
</feature>
<feature type="mutagenesis site" description="Moderately defective with 56% of activity." evidence="11">
    <original>K</original>
    <variation>A</variation>
    <location>
        <position position="973"/>
    </location>
</feature>
<feature type="mutagenesis site" description="Impaired cleavage." evidence="5">
    <original>D</original>
    <variation>N</variation>
    <location>
        <position position="986"/>
    </location>
</feature>
<feature type="sequence conflict" description="In Ref. 1; AAA40028." evidence="24" ref="1">
    <original>H</original>
    <variation>L</variation>
    <location>
        <position position="609"/>
    </location>
</feature>
<feature type="helix" evidence="25">
    <location>
        <begin position="266"/>
        <end position="268"/>
    </location>
</feature>
<feature type="helix" evidence="25">
    <location>
        <begin position="273"/>
        <end position="275"/>
    </location>
</feature>
<feature type="strand" evidence="25">
    <location>
        <begin position="276"/>
        <end position="278"/>
    </location>
</feature>
<feature type="helix" evidence="25">
    <location>
        <begin position="282"/>
        <end position="287"/>
    </location>
</feature>
<feature type="turn" evidence="25">
    <location>
        <begin position="291"/>
        <end position="293"/>
    </location>
</feature>
<feature type="strand" evidence="25">
    <location>
        <begin position="298"/>
        <end position="302"/>
    </location>
</feature>
<feature type="strand" evidence="25">
    <location>
        <begin position="308"/>
        <end position="310"/>
    </location>
</feature>
<feature type="helix" evidence="25">
    <location>
        <begin position="311"/>
        <end position="320"/>
    </location>
</feature>
<feature type="turn" evidence="25">
    <location>
        <begin position="326"/>
        <end position="328"/>
    </location>
</feature>
<feature type="helix" evidence="25">
    <location>
        <begin position="334"/>
        <end position="336"/>
    </location>
</feature>
<feature type="helix" evidence="25">
    <location>
        <begin position="342"/>
        <end position="350"/>
    </location>
</feature>
<feature type="strand" evidence="25">
    <location>
        <begin position="352"/>
        <end position="354"/>
    </location>
</feature>
<feature type="strand" evidence="25">
    <location>
        <begin position="363"/>
        <end position="365"/>
    </location>
</feature>
<feature type="helix" evidence="25">
    <location>
        <begin position="366"/>
        <end position="374"/>
    </location>
</feature>
<feature type="helix" evidence="26">
    <location>
        <begin position="396"/>
        <end position="398"/>
    </location>
</feature>
<feature type="helix" evidence="26">
    <location>
        <begin position="401"/>
        <end position="422"/>
    </location>
</feature>
<feature type="helix" evidence="26">
    <location>
        <begin position="427"/>
        <end position="441"/>
    </location>
</feature>
<feature type="helix" evidence="26">
    <location>
        <begin position="445"/>
        <end position="454"/>
    </location>
</feature>
<feature type="helix" evidence="27">
    <location>
        <begin position="464"/>
        <end position="473"/>
    </location>
</feature>
<feature type="helix" evidence="27">
    <location>
        <begin position="478"/>
        <end position="491"/>
    </location>
</feature>
<feature type="strand" evidence="27">
    <location>
        <begin position="492"/>
        <end position="494"/>
    </location>
</feature>
<feature type="helix" evidence="27">
    <location>
        <begin position="500"/>
        <end position="510"/>
    </location>
</feature>
<feature type="strand" evidence="27">
    <location>
        <begin position="511"/>
        <end position="515"/>
    </location>
</feature>
<feature type="strand" evidence="27">
    <location>
        <begin position="517"/>
        <end position="521"/>
    </location>
</feature>
<feature type="strand" evidence="27">
    <location>
        <begin position="534"/>
        <end position="536"/>
    </location>
</feature>
<feature type="turn" evidence="27">
    <location>
        <begin position="537"/>
        <end position="540"/>
    </location>
</feature>
<feature type="strand" evidence="28">
    <location>
        <begin position="545"/>
        <end position="547"/>
    </location>
</feature>
<feature type="strand" evidence="27">
    <location>
        <begin position="554"/>
        <end position="557"/>
    </location>
</feature>
<feature type="helix" evidence="27">
    <location>
        <begin position="559"/>
        <end position="569"/>
    </location>
</feature>
<feature type="helix" evidence="27">
    <location>
        <begin position="571"/>
        <end position="580"/>
    </location>
</feature>
<feature type="strand" evidence="27">
    <location>
        <begin position="590"/>
        <end position="602"/>
    </location>
</feature>
<feature type="strand" evidence="27">
    <location>
        <begin position="610"/>
        <end position="612"/>
    </location>
</feature>
<feature type="strand" evidence="27">
    <location>
        <begin position="619"/>
        <end position="631"/>
    </location>
</feature>
<feature type="strand" evidence="27">
    <location>
        <begin position="639"/>
        <end position="642"/>
    </location>
</feature>
<feature type="turn" evidence="27">
    <location>
        <begin position="649"/>
        <end position="651"/>
    </location>
</feature>
<feature type="strand" evidence="27">
    <location>
        <begin position="652"/>
        <end position="658"/>
    </location>
</feature>
<feature type="helix" evidence="27">
    <location>
        <begin position="665"/>
        <end position="682"/>
    </location>
</feature>
<feature type="strand" evidence="27">
    <location>
        <begin position="687"/>
        <end position="691"/>
    </location>
</feature>
<feature type="strand" evidence="27">
    <location>
        <begin position="694"/>
        <end position="702"/>
    </location>
</feature>
<feature type="helix" evidence="27">
    <location>
        <begin position="709"/>
        <end position="715"/>
    </location>
</feature>
<feature type="strand" evidence="27">
    <location>
        <begin position="721"/>
        <end position="725"/>
    </location>
</feature>
<feature type="strand" evidence="27">
    <location>
        <begin position="728"/>
        <end position="730"/>
    </location>
</feature>
<feature type="helix" evidence="27">
    <location>
        <begin position="734"/>
        <end position="739"/>
    </location>
</feature>
<feature type="helix" evidence="27">
    <location>
        <begin position="750"/>
        <end position="762"/>
    </location>
</feature>
<feature type="helix" evidence="27">
    <location>
        <begin position="769"/>
        <end position="775"/>
    </location>
</feature>
<feature type="turn" evidence="27">
    <location>
        <begin position="776"/>
        <end position="778"/>
    </location>
</feature>
<feature type="helix" evidence="27">
    <location>
        <begin position="793"/>
        <end position="812"/>
    </location>
</feature>
<feature type="turn" evidence="27">
    <location>
        <begin position="813"/>
        <end position="817"/>
    </location>
</feature>
<feature type="helix" evidence="27">
    <location>
        <begin position="825"/>
        <end position="839"/>
    </location>
</feature>
<feature type="helix" evidence="27">
    <location>
        <begin position="851"/>
        <end position="857"/>
    </location>
</feature>
<feature type="helix" evidence="27">
    <location>
        <begin position="860"/>
        <end position="867"/>
    </location>
</feature>
<feature type="helix" evidence="27">
    <location>
        <begin position="873"/>
        <end position="894"/>
    </location>
</feature>
<feature type="helix" evidence="27">
    <location>
        <begin position="898"/>
        <end position="901"/>
    </location>
</feature>
<feature type="helix" evidence="27">
    <location>
        <begin position="903"/>
        <end position="907"/>
    </location>
</feature>
<feature type="helix" evidence="27">
    <location>
        <begin position="909"/>
        <end position="922"/>
    </location>
</feature>
<feature type="turn" evidence="27">
    <location>
        <begin position="926"/>
        <end position="928"/>
    </location>
</feature>
<feature type="helix" evidence="27">
    <location>
        <begin position="934"/>
        <end position="941"/>
    </location>
</feature>
<feature type="helix" evidence="27">
    <location>
        <begin position="943"/>
        <end position="950"/>
    </location>
</feature>
<feature type="helix" evidence="27">
    <location>
        <begin position="954"/>
        <end position="956"/>
    </location>
</feature>
<feature type="helix" evidence="27">
    <location>
        <begin position="959"/>
        <end position="974"/>
    </location>
</feature>
<feature type="turn" evidence="27">
    <location>
        <begin position="980"/>
        <end position="982"/>
    </location>
</feature>
<feature type="helix" evidence="27">
    <location>
        <begin position="983"/>
        <end position="994"/>
    </location>
</feature>
<feature type="helix" evidence="27">
    <location>
        <begin position="997"/>
        <end position="1002"/>
    </location>
</feature>
<feature type="turn" evidence="27">
    <location>
        <begin position="1003"/>
        <end position="1007"/>
    </location>
</feature>
<name>RAG1_MOUSE</name>
<reference key="1">
    <citation type="journal article" date="1989" name="Cell">
        <title>The V(D)J recombination activating gene, RAG-1.</title>
        <authorList>
            <person name="Schatz D.G."/>
            <person name="Oettinger M.A."/>
            <person name="Baltimore D."/>
        </authorList>
    </citation>
    <scope>NUCLEOTIDE SEQUENCE [MRNA]</scope>
    <scope>FUNCTION</scope>
</reference>
<reference key="2">
    <citation type="journal article" date="2009" name="PLoS Biol.">
        <title>Lineage-specific biology revealed by a finished genome assembly of the mouse.</title>
        <authorList>
            <person name="Church D.M."/>
            <person name="Goodstadt L."/>
            <person name="Hillier L.W."/>
            <person name="Zody M.C."/>
            <person name="Goldstein S."/>
            <person name="She X."/>
            <person name="Bult C.J."/>
            <person name="Agarwala R."/>
            <person name="Cherry J.L."/>
            <person name="DiCuccio M."/>
            <person name="Hlavina W."/>
            <person name="Kapustin Y."/>
            <person name="Meric P."/>
            <person name="Maglott D."/>
            <person name="Birtle Z."/>
            <person name="Marques A.C."/>
            <person name="Graves T."/>
            <person name="Zhou S."/>
            <person name="Teague B."/>
            <person name="Potamousis K."/>
            <person name="Churas C."/>
            <person name="Place M."/>
            <person name="Herschleb J."/>
            <person name="Runnheim R."/>
            <person name="Forrest D."/>
            <person name="Amos-Landgraf J."/>
            <person name="Schwartz D.C."/>
            <person name="Cheng Z."/>
            <person name="Lindblad-Toh K."/>
            <person name="Eichler E.E."/>
            <person name="Ponting C.P."/>
        </authorList>
    </citation>
    <scope>NUCLEOTIDE SEQUENCE [LARGE SCALE GENOMIC DNA]</scope>
    <source>
        <strain>C57BL/6J</strain>
    </source>
</reference>
<reference key="3">
    <citation type="submission" date="2005-07" db="EMBL/GenBank/DDBJ databases">
        <authorList>
            <person name="Mural R.J."/>
            <person name="Adams M.D."/>
            <person name="Myers E.W."/>
            <person name="Smith H.O."/>
            <person name="Venter J.C."/>
        </authorList>
    </citation>
    <scope>NUCLEOTIDE SEQUENCE [LARGE SCALE GENOMIC DNA]</scope>
</reference>
<reference key="4">
    <citation type="journal article" date="2004" name="Genome Res.">
        <title>The status, quality, and expansion of the NIH full-length cDNA project: the Mammalian Gene Collection (MGC).</title>
        <authorList>
            <consortium name="The MGC Project Team"/>
        </authorList>
    </citation>
    <scope>NUCLEOTIDE SEQUENCE [LARGE SCALE MRNA]</scope>
    <source>
        <tissue>Brain</tissue>
    </source>
</reference>
<reference key="5">
    <citation type="journal article" date="1992" name="Cell">
        <title>RAG-1-deficient mice have no mature B and T lymphocytes.</title>
        <authorList>
            <person name="Mombaerts P."/>
            <person name="Iacomini J."/>
            <person name="Johnson R.S."/>
            <person name="Herrup K."/>
            <person name="Tonegawa S."/>
            <person name="Papaioannou V.E."/>
        </authorList>
    </citation>
    <scope>DISRUPTION PHENOTYPE</scope>
</reference>
<reference key="6">
    <citation type="journal article" date="1993" name="Nucleic Acids Res.">
        <title>Expression and V(D)J recombination activity of mutated RAG-1 proteins.</title>
        <authorList>
            <person name="Sadofsky M.J."/>
            <person name="Hesse J.E."/>
            <person name="McBlane J.F."/>
            <person name="Gellert M."/>
        </authorList>
    </citation>
    <scope>SUBCELLULAR LOCATION</scope>
</reference>
<reference key="7">
    <citation type="journal article" date="1995" name="Cell">
        <title>Cleavage at a V(D)J recombination signal requires only RAG1 and RAG2 proteins and occurs in two steps.</title>
        <authorList>
            <person name="McBlane J.F."/>
            <person name="van Gent D.C."/>
            <person name="Ramsden D.A."/>
            <person name="Romeo C."/>
            <person name="Cuomo C.A."/>
            <person name="Gellert M."/>
            <person name="Oettinger M.A."/>
        </authorList>
    </citation>
    <scope>FUNCTION</scope>
    <scope>INTERACTION WITH RAG2</scope>
</reference>
<reference key="8">
    <citation type="journal article" date="1997" name="Cell">
        <title>RAG1 and RAG2 form a stable postcleavage synaptic complex with DNA containing signal ends in V(D)J recombination.</title>
        <authorList>
            <person name="Agrawal A."/>
            <person name="Schatz D.G."/>
        </authorList>
    </citation>
    <scope>FUNCTION</scope>
    <scope>IDENTIFICATION IN THE RAG COMPLEX</scope>
</reference>
<reference key="9">
    <citation type="journal article" date="1997" name="EMBO J.">
        <title>Stimulation of V(D)J cleavage by high mobility group proteins.</title>
        <authorList>
            <person name="van Gent D.C."/>
            <person name="Hiom K."/>
            <person name="Paull T.T."/>
            <person name="Gellert M."/>
        </authorList>
    </citation>
    <scope>IDENTIFICATION IN THE RAG COMPLEX</scope>
</reference>
<reference key="10">
    <citation type="journal article" date="1999" name="Genes Dev.">
        <title>Mutational analysis of RAG1 and RAG2 identifies three catalytic amino acids in RAG1 critical for both cleavage steps of V(D)J recombination.</title>
        <authorList>
            <person name="Landree M.A."/>
            <person name="Wibbenmeyer J.A."/>
            <person name="Roth D.B."/>
        </authorList>
    </citation>
    <scope>FUNCTION AS ENDONUCLEASE</scope>
    <scope>DNA-BINDING</scope>
    <scope>COFACTOR</scope>
    <scope>MUTAGENESIS OF GLU-597; ASP-600; ASP-708; GLU-709; GLU-719; ASP-792; GLU-811; GLU-959; GLU-962 AND ASP-986</scope>
</reference>
<reference key="11">
    <citation type="journal article" date="1999" name="Genes Dev.">
        <title>Mutations of acidic residues in RAG1 define the active site of the V(D)J recombinase.</title>
        <authorList>
            <person name="Kim D.R."/>
            <person name="Dai Y."/>
            <person name="Mundy C.L."/>
            <person name="Yang W."/>
            <person name="Oettinger M.A."/>
        </authorList>
    </citation>
    <scope>MUTAGENESIS OF ASP-600; ASP-708 AND GLU-962</scope>
</reference>
<reference key="12">
    <citation type="journal article" date="2000" name="Mol. Cell">
        <title>Identification of two catalytic residues in RAG1 that define a single active site within the RAG1/RAG2 protein complex.</title>
        <authorList>
            <person name="Fugmann S.D."/>
            <person name="Villey I.J."/>
            <person name="Ptaszek L.M."/>
            <person name="Schatz D.G."/>
        </authorList>
    </citation>
    <scope>FUNCTION</scope>
    <scope>MUTAGENESIS OF ASP-600 AND ASP-708</scope>
</reference>
<reference key="13">
    <citation type="journal article" date="2003" name="Genes Dev.">
        <title>The RAG1 N-terminal domain is an E3 ubiquitin ligase.</title>
        <authorList>
            <person name="Yurchenko V."/>
            <person name="Xue Z."/>
            <person name="Sadofsky M."/>
        </authorList>
    </citation>
    <scope>FUNCTION AS AN E3 UBIQUITIN LIGASE</scope>
</reference>
<reference key="14">
    <citation type="journal article" date="2003" name="Proc. Natl. Acad. Sci. U.S.A.">
        <title>Autoubiquitylation of the V(D)J recombinase protein RAG1.</title>
        <authorList>
            <person name="Jones J.M."/>
            <person name="Gellert M."/>
        </authorList>
    </citation>
    <scope>FUNCTION</scope>
    <scope>AUTOUBIQUITINATION</scope>
    <scope>UBIQUITINATION AT LYS-233</scope>
    <scope>RING-TYPE ZINC-FINGER</scope>
    <scope>MUTAGENESIS OF LYS-233 AND CYS-325</scope>
</reference>
<reference key="15">
    <citation type="journal article" date="2006" name="Nat. Struct. Mol. Biol.">
        <title>Amino acid residues in Rag1 crucial for DNA hairpin formation.</title>
        <authorList>
            <person name="Lu C.P."/>
            <person name="Sandoval H."/>
            <person name="Brandt V.L."/>
            <person name="Rice P.A."/>
            <person name="Roth D.B."/>
        </authorList>
    </citation>
    <scope>FUNCTION</scope>
    <scope>MUTAGENESIS OF TYR-707; TYR-725; TRP-760; TRP-893; TYR-935; TRP-956; GLU-962; PHE-971; ARG-972 AND LYS-973</scope>
</reference>
<reference key="16">
    <citation type="journal article" date="2009" name="Mol. Cell">
        <title>H3K4me3 stimulates the V(D)J RAG complex for both nicking and hairpinning in trans in addition to tethering in cis: implications for translocations.</title>
        <authorList>
            <person name="Shimazaki N."/>
            <person name="Tsai A.G."/>
            <person name="Lieber M.R."/>
        </authorList>
    </citation>
    <scope>FUNCTION</scope>
</reference>
<reference key="17">
    <citation type="journal article" date="2009" name="Mol. Immunol.">
        <title>Karyopherin alpha 1 is a putative substrate of the RAG1 ubiquitin ligase.</title>
        <authorList>
            <person name="Simkus C."/>
            <person name="Makiya M."/>
            <person name="Jones J.M."/>
        </authorList>
    </citation>
    <scope>FUNCTION</scope>
    <scope>AUTOUBIQUITINATION</scope>
</reference>
<reference key="18">
    <citation type="journal article" date="2009" name="Nat. Immunol.">
        <title>RAG-1 and ATM coordinate monoallelic recombination and nuclear positioning of immunoglobulin loci.</title>
        <authorList>
            <person name="Hewitt S.L."/>
            <person name="Yin B."/>
            <person name="Ji Y."/>
            <person name="Chaumeil J."/>
            <person name="Marszalek K."/>
            <person name="Tenthorey J."/>
            <person name="Salvagiotto G."/>
            <person name="Steinel N."/>
            <person name="Ramsey L.B."/>
            <person name="Ghysdael J."/>
            <person name="Farrar M.A."/>
            <person name="Sleckman B.P."/>
            <person name="Schatz D.G."/>
            <person name="Busslinger M."/>
            <person name="Bassing C.H."/>
            <person name="Skok J.A."/>
        </authorList>
    </citation>
    <scope>FUNCTION</scope>
    <scope>MUTAGENESIS OF ASP-708</scope>
</reference>
<reference key="19">
    <citation type="journal article" date="2010" name="Mol. Cell">
        <title>The RING domain of RAG1 ubiquitylates histone H3: a novel activity in chromatin-mediated regulation of V(D)J joining.</title>
        <authorList>
            <person name="Grazini U."/>
            <person name="Zanardi F."/>
            <person name="Citterio E."/>
            <person name="Casola S."/>
            <person name="Goding C.R."/>
            <person name="McBlane F."/>
        </authorList>
    </citation>
    <scope>FUNCTION AS AN E3 UBIQUITIN LIGASE</scope>
    <scope>MUTAGENESIS OF HIS-307 AND CYS-325</scope>
</reference>
<reference key="20">
    <citation type="journal article" date="2012" name="EMBO J.">
        <title>VprBP binds full-length RAG1 and is required for B-cell development and V(D)J recombination fidelity.</title>
        <authorList>
            <person name="Kassmeier M.D."/>
            <person name="Mondal K."/>
            <person name="Palmer V.L."/>
            <person name="Raval P."/>
            <person name="Kumar S."/>
            <person name="Perry G.A."/>
            <person name="Anderson D.K."/>
            <person name="Ciborowski P."/>
            <person name="Jackson S."/>
            <person name="Xiong Y."/>
            <person name="Swanson P.C."/>
        </authorList>
    </citation>
    <scope>FUNCTION</scope>
    <scope>INTERACTION WITH DCAF1</scope>
</reference>
<reference key="21">
    <citation type="journal article" date="1997" name="Nat. Struct. Biol.">
        <title>Crystal structure of the RAG1 dimerization domain reveals multiple zinc-binding motifs including a novel zinc binuclear cluster.</title>
        <authorList>
            <person name="Bellon S.F."/>
            <person name="Rodgers K.K."/>
            <person name="Schatz D.G."/>
            <person name="Coleman J.E."/>
            <person name="Steitz T.A."/>
        </authorList>
    </citation>
    <scope>X-RAY CRYSTALLOGRAPHY (2.1 ANGSTROMS) OF 265-380 IN COMPLEX WITH ZINC</scope>
    <scope>SUBUNIT</scope>
</reference>
<reference key="22">
    <citation type="journal article" date="2009" name="Nat. Struct. Mol. Biol.">
        <title>Structure of the RAG1 nonamer binding domain with DNA reveals a dimer that mediates DNA synapsis.</title>
        <authorList>
            <person name="Yin F.F."/>
            <person name="Bailey S."/>
            <person name="Innis C.A."/>
            <person name="Ciubotaru M."/>
            <person name="Kamtekar S."/>
            <person name="Steitz T.A."/>
            <person name="Schatz D.G."/>
        </authorList>
    </citation>
    <scope>X-RAY CRYSTALLOGRAPHY (3.0 ANGSTROMS) OF 389-464 IN COMPLEX WITH DNA NONAMER</scope>
    <scope>FUNCTION AS ENDONUCLEASE</scope>
    <scope>DNA-BINDING</scope>
    <scope>DOMAIN NBD</scope>
    <scope>INTERACTION WITH RAG2</scope>
    <scope>MUTAGENESIS OF ARG-391; ARG-393; ARG-401; ARG-402; LYS-405; HIS-406; ARG-407; ASN-443 AND HIS-445</scope>
</reference>
<accession>P15919</accession>
<accession>A2AVN8</accession>